<gene>
    <name evidence="10" type="primary">purT</name>
    <name type="ordered locus">b1849</name>
    <name type="ordered locus">JW1838</name>
</gene>
<dbReference type="EC" id="6.3.1.21" evidence="5 7 8"/>
<dbReference type="EMBL" id="L20897">
    <property type="protein sequence ID" value="AAA23861.1"/>
    <property type="molecule type" value="Genomic_DNA"/>
</dbReference>
<dbReference type="EMBL" id="U00096">
    <property type="protein sequence ID" value="AAC74919.1"/>
    <property type="molecule type" value="Genomic_DNA"/>
</dbReference>
<dbReference type="EMBL" id="AP009048">
    <property type="protein sequence ID" value="BAA15657.2"/>
    <property type="molecule type" value="Genomic_DNA"/>
</dbReference>
<dbReference type="PIR" id="A54227">
    <property type="entry name" value="A54227"/>
</dbReference>
<dbReference type="RefSeq" id="NP_416363.1">
    <property type="nucleotide sequence ID" value="NC_000913.3"/>
</dbReference>
<dbReference type="RefSeq" id="WP_000173484.1">
    <property type="nucleotide sequence ID" value="NZ_SSZK01000001.1"/>
</dbReference>
<dbReference type="PDB" id="1EYZ">
    <property type="method" value="X-ray"/>
    <property type="resolution" value="1.75 A"/>
    <property type="chains" value="A/B=1-392"/>
</dbReference>
<dbReference type="PDB" id="1EZ1">
    <property type="method" value="X-ray"/>
    <property type="resolution" value="1.75 A"/>
    <property type="chains" value="A/B=1-392"/>
</dbReference>
<dbReference type="PDB" id="1KJ8">
    <property type="method" value="X-ray"/>
    <property type="resolution" value="1.60 A"/>
    <property type="chains" value="A/B=2-392"/>
</dbReference>
<dbReference type="PDB" id="1KJ9">
    <property type="method" value="X-ray"/>
    <property type="resolution" value="1.60 A"/>
    <property type="chains" value="A/B=2-392"/>
</dbReference>
<dbReference type="PDB" id="1KJI">
    <property type="method" value="X-ray"/>
    <property type="resolution" value="1.60 A"/>
    <property type="chains" value="A/B=2-392"/>
</dbReference>
<dbReference type="PDB" id="1KJJ">
    <property type="method" value="X-ray"/>
    <property type="resolution" value="1.75 A"/>
    <property type="chains" value="A/B=2-392"/>
</dbReference>
<dbReference type="PDB" id="1KJQ">
    <property type="method" value="X-ray"/>
    <property type="resolution" value="1.05 A"/>
    <property type="chains" value="A/B=2-392"/>
</dbReference>
<dbReference type="PDBsum" id="1EYZ"/>
<dbReference type="PDBsum" id="1EZ1"/>
<dbReference type="PDBsum" id="1KJ8"/>
<dbReference type="PDBsum" id="1KJ9"/>
<dbReference type="PDBsum" id="1KJI"/>
<dbReference type="PDBsum" id="1KJJ"/>
<dbReference type="PDBsum" id="1KJQ"/>
<dbReference type="SMR" id="P33221"/>
<dbReference type="BioGRID" id="4260365">
    <property type="interactions" value="14"/>
</dbReference>
<dbReference type="BioGRID" id="850725">
    <property type="interactions" value="7"/>
</dbReference>
<dbReference type="DIP" id="DIP-10618N"/>
<dbReference type="FunCoup" id="P33221">
    <property type="interactions" value="184"/>
</dbReference>
<dbReference type="IntAct" id="P33221">
    <property type="interactions" value="7"/>
</dbReference>
<dbReference type="STRING" id="511145.b1849"/>
<dbReference type="DrugBank" id="DB03434">
    <property type="generic name" value="3-(N-morpholino)propanesulfonic acid"/>
</dbReference>
<dbReference type="DrugBank" id="DB02930">
    <property type="generic name" value="Adenosine 5'-[gamma-thio]triphosphate"/>
</dbReference>
<dbReference type="DrugBank" id="DB03909">
    <property type="generic name" value="Adenosine-5'-[Beta, Gamma-Methylene]Triphosphate"/>
</dbReference>
<dbReference type="DrugBank" id="DB02236">
    <property type="generic name" value="Glycinamide Ribonucleotide"/>
</dbReference>
<dbReference type="DrugBank" id="DB04395">
    <property type="generic name" value="Phosphoaminophosphonic Acid-Adenylate Ester"/>
</dbReference>
<dbReference type="iPTMnet" id="P33221"/>
<dbReference type="jPOST" id="P33221"/>
<dbReference type="PaxDb" id="511145-b1849"/>
<dbReference type="EnsemblBacteria" id="AAC74919">
    <property type="protein sequence ID" value="AAC74919"/>
    <property type="gene ID" value="b1849"/>
</dbReference>
<dbReference type="GeneID" id="93776116"/>
<dbReference type="GeneID" id="946368"/>
<dbReference type="KEGG" id="ecj:JW1838"/>
<dbReference type="KEGG" id="eco:b1849"/>
<dbReference type="KEGG" id="ecoc:C3026_10535"/>
<dbReference type="PATRIC" id="fig|1411691.4.peg.400"/>
<dbReference type="EchoBASE" id="EB1757"/>
<dbReference type="eggNOG" id="COG0027">
    <property type="taxonomic scope" value="Bacteria"/>
</dbReference>
<dbReference type="InParanoid" id="P33221"/>
<dbReference type="OMA" id="GMVTMIT"/>
<dbReference type="OrthoDB" id="9804625at2"/>
<dbReference type="PhylomeDB" id="P33221"/>
<dbReference type="BioCyc" id="EcoCyc:GARTRANSFORMYL2-MONOMER"/>
<dbReference type="BioCyc" id="MetaCyc:GARTRANSFORMYL2-MONOMER"/>
<dbReference type="BRENDA" id="6.3.1.21">
    <property type="organism ID" value="2026"/>
</dbReference>
<dbReference type="SABIO-RK" id="P33221"/>
<dbReference type="UniPathway" id="UPA00074">
    <property type="reaction ID" value="UER00127"/>
</dbReference>
<dbReference type="EvolutionaryTrace" id="P33221"/>
<dbReference type="PHI-base" id="PHI:8653"/>
<dbReference type="PRO" id="PR:P33221"/>
<dbReference type="Proteomes" id="UP000000625">
    <property type="component" value="Chromosome"/>
</dbReference>
<dbReference type="GO" id="GO:0005829">
    <property type="term" value="C:cytosol"/>
    <property type="evidence" value="ECO:0000314"/>
    <property type="project" value="EcoCyc"/>
</dbReference>
<dbReference type="GO" id="GO:0008776">
    <property type="term" value="F:acetate kinase activity"/>
    <property type="evidence" value="ECO:0000314"/>
    <property type="project" value="EcoCyc"/>
</dbReference>
<dbReference type="GO" id="GO:0005524">
    <property type="term" value="F:ATP binding"/>
    <property type="evidence" value="ECO:0007669"/>
    <property type="project" value="UniProtKB-UniRule"/>
</dbReference>
<dbReference type="GO" id="GO:0000287">
    <property type="term" value="F:magnesium ion binding"/>
    <property type="evidence" value="ECO:0007669"/>
    <property type="project" value="InterPro"/>
</dbReference>
<dbReference type="GO" id="GO:0043815">
    <property type="term" value="F:phosphoribosylglycinamide formyltransferase 2 activity"/>
    <property type="evidence" value="ECO:0007669"/>
    <property type="project" value="UniProtKB-UniRule"/>
</dbReference>
<dbReference type="GO" id="GO:0004644">
    <property type="term" value="F:phosphoribosylglycinamide formyltransferase activity"/>
    <property type="evidence" value="ECO:0007669"/>
    <property type="project" value="InterPro"/>
</dbReference>
<dbReference type="GO" id="GO:0006189">
    <property type="term" value="P:'de novo' IMP biosynthetic process"/>
    <property type="evidence" value="ECO:0007669"/>
    <property type="project" value="UniProtKB-UniRule"/>
</dbReference>
<dbReference type="FunFam" id="3.30.1490.20:FF:000013">
    <property type="entry name" value="Formate-dependent phosphoribosylglycinamide formyltransferase"/>
    <property type="match status" value="1"/>
</dbReference>
<dbReference type="FunFam" id="3.30.470.20:FF:000027">
    <property type="entry name" value="Formate-dependent phosphoribosylglycinamide formyltransferase"/>
    <property type="match status" value="1"/>
</dbReference>
<dbReference type="FunFam" id="3.40.50.20:FF:000007">
    <property type="entry name" value="Formate-dependent phosphoribosylglycinamide formyltransferase"/>
    <property type="match status" value="1"/>
</dbReference>
<dbReference type="Gene3D" id="3.40.50.20">
    <property type="match status" value="1"/>
</dbReference>
<dbReference type="Gene3D" id="3.30.1490.20">
    <property type="entry name" value="ATP-grasp fold, A domain"/>
    <property type="match status" value="1"/>
</dbReference>
<dbReference type="Gene3D" id="3.30.470.20">
    <property type="entry name" value="ATP-grasp fold, B domain"/>
    <property type="match status" value="1"/>
</dbReference>
<dbReference type="HAMAP" id="MF_01643">
    <property type="entry name" value="PurT"/>
    <property type="match status" value="1"/>
</dbReference>
<dbReference type="InterPro" id="IPR011761">
    <property type="entry name" value="ATP-grasp"/>
</dbReference>
<dbReference type="InterPro" id="IPR003135">
    <property type="entry name" value="ATP-grasp_carboxylate-amine"/>
</dbReference>
<dbReference type="InterPro" id="IPR013815">
    <property type="entry name" value="ATP_grasp_subdomain_1"/>
</dbReference>
<dbReference type="InterPro" id="IPR016185">
    <property type="entry name" value="PreATP-grasp_dom_sf"/>
</dbReference>
<dbReference type="InterPro" id="IPR005862">
    <property type="entry name" value="PurT"/>
</dbReference>
<dbReference type="InterPro" id="IPR054350">
    <property type="entry name" value="PurT/PurK_preATP-grasp"/>
</dbReference>
<dbReference type="InterPro" id="IPR048740">
    <property type="entry name" value="PurT_C"/>
</dbReference>
<dbReference type="InterPro" id="IPR011054">
    <property type="entry name" value="Rudment_hybrid_motif"/>
</dbReference>
<dbReference type="NCBIfam" id="NF006766">
    <property type="entry name" value="PRK09288.1"/>
    <property type="match status" value="1"/>
</dbReference>
<dbReference type="NCBIfam" id="TIGR01142">
    <property type="entry name" value="purT"/>
    <property type="match status" value="1"/>
</dbReference>
<dbReference type="PANTHER" id="PTHR43055">
    <property type="entry name" value="FORMATE-DEPENDENT PHOSPHORIBOSYLGLYCINAMIDE FORMYLTRANSFERASE"/>
    <property type="match status" value="1"/>
</dbReference>
<dbReference type="PANTHER" id="PTHR43055:SF1">
    <property type="entry name" value="FORMATE-DEPENDENT PHOSPHORIBOSYLGLYCINAMIDE FORMYLTRANSFERASE"/>
    <property type="match status" value="1"/>
</dbReference>
<dbReference type="Pfam" id="PF02222">
    <property type="entry name" value="ATP-grasp"/>
    <property type="match status" value="1"/>
</dbReference>
<dbReference type="Pfam" id="PF21244">
    <property type="entry name" value="PurT_C"/>
    <property type="match status" value="1"/>
</dbReference>
<dbReference type="Pfam" id="PF22660">
    <property type="entry name" value="RS_preATP-grasp-like"/>
    <property type="match status" value="1"/>
</dbReference>
<dbReference type="SUPFAM" id="SSF56059">
    <property type="entry name" value="Glutathione synthetase ATP-binding domain-like"/>
    <property type="match status" value="1"/>
</dbReference>
<dbReference type="SUPFAM" id="SSF52440">
    <property type="entry name" value="PreATP-grasp domain"/>
    <property type="match status" value="1"/>
</dbReference>
<dbReference type="SUPFAM" id="SSF51246">
    <property type="entry name" value="Rudiment single hybrid motif"/>
    <property type="match status" value="1"/>
</dbReference>
<dbReference type="PROSITE" id="PS50975">
    <property type="entry name" value="ATP_GRASP"/>
    <property type="match status" value="1"/>
</dbReference>
<protein>
    <recommendedName>
        <fullName evidence="11">Formate-dependent phosphoribosylglycinamide formyltransferase</fullName>
        <ecNumber evidence="5 7 8">6.3.1.21</ecNumber>
    </recommendedName>
    <alternativeName>
        <fullName evidence="9">5'-phosphoribosylglycinamide transformylase 2</fullName>
    </alternativeName>
    <alternativeName>
        <fullName evidence="11">Formate-dependent GAR transformylase</fullName>
    </alternativeName>
    <alternativeName>
        <fullName evidence="9">GAR transformylase 2</fullName>
        <shortName evidence="9">GART 2</shortName>
    </alternativeName>
    <alternativeName>
        <fullName evidence="10">GAR transformylase T</fullName>
    </alternativeName>
    <alternativeName>
        <fullName evidence="9">Non-folate glycinamide ribonucleotide transformylase</fullName>
    </alternativeName>
    <alternativeName>
        <fullName evidence="9">Phosphoribosylglycinamide formyltransferase 2</fullName>
    </alternativeName>
</protein>
<organism>
    <name type="scientific">Escherichia coli (strain K12)</name>
    <dbReference type="NCBI Taxonomy" id="83333"/>
    <lineage>
        <taxon>Bacteria</taxon>
        <taxon>Pseudomonadati</taxon>
        <taxon>Pseudomonadota</taxon>
        <taxon>Gammaproteobacteria</taxon>
        <taxon>Enterobacterales</taxon>
        <taxon>Enterobacteriaceae</taxon>
        <taxon>Escherichia</taxon>
    </lineage>
</organism>
<comment type="function">
    <text evidence="5 6 7 8">Involved in the de novo purine biosynthesis (PubMed:8117714, PubMed:8501063, PubMed:9184151). Catalyzes the transfer of formate to 5-phospho-ribosyl-glycinamide (GAR), producing 5-phospho-ribosyl-N-formylglycinamide (FGAR) (PubMed:8117714, PubMed:8501063, PubMed:9184151). Formate is provided by PurU via hydrolysis of 10-formyl-tetrahydrofolate (PubMed:8226647). PurT is also able to cleave acetyl phosphate and carbamoyl phosphate to produce ATP with acetate and carbamate, respectively (PubMed:8117714, PubMed:9184151).</text>
</comment>
<comment type="catalytic activity">
    <reaction evidence="1 5 7 8">
        <text>N(1)-(5-phospho-beta-D-ribosyl)glycinamide + formate + ATP = N(2)-formyl-N(1)-(5-phospho-beta-D-ribosyl)glycinamide + ADP + phosphate + H(+)</text>
        <dbReference type="Rhea" id="RHEA:24829"/>
        <dbReference type="ChEBI" id="CHEBI:15378"/>
        <dbReference type="ChEBI" id="CHEBI:15740"/>
        <dbReference type="ChEBI" id="CHEBI:30616"/>
        <dbReference type="ChEBI" id="CHEBI:43474"/>
        <dbReference type="ChEBI" id="CHEBI:143788"/>
        <dbReference type="ChEBI" id="CHEBI:147286"/>
        <dbReference type="ChEBI" id="CHEBI:456216"/>
        <dbReference type="EC" id="6.3.1.21"/>
    </reaction>
    <physiologicalReaction direction="left-to-right" evidence="1 5 7 8">
        <dbReference type="Rhea" id="RHEA:24830"/>
    </physiologicalReaction>
</comment>
<comment type="catalytic activity">
    <reaction evidence="5 8">
        <text>acetate + ATP = acetyl phosphate + ADP</text>
        <dbReference type="Rhea" id="RHEA:11352"/>
        <dbReference type="ChEBI" id="CHEBI:22191"/>
        <dbReference type="ChEBI" id="CHEBI:30089"/>
        <dbReference type="ChEBI" id="CHEBI:30616"/>
        <dbReference type="ChEBI" id="CHEBI:456216"/>
    </reaction>
</comment>
<comment type="catalytic activity">
    <reaction evidence="8">
        <text>carbamate + ATP = carbamoyl phosphate + ADP</text>
        <dbReference type="Rhea" id="RHEA:30755"/>
        <dbReference type="ChEBI" id="CHEBI:13941"/>
        <dbReference type="ChEBI" id="CHEBI:30616"/>
        <dbReference type="ChEBI" id="CHEBI:58228"/>
        <dbReference type="ChEBI" id="CHEBI:456216"/>
    </reaction>
</comment>
<comment type="biophysicochemical properties">
    <kinetics>
        <KM evidence="5 8">10.1 uM for GAR (at pH 8)</KM>
        <KM evidence="8">45 uM for ATP (with formate)</KM>
        <KM evidence="5 8">77.4 uM for ATP (with acetate at pH 8)</KM>
        <KM evidence="5 8">319 uM for formate (at pH 8)</KM>
        <KM evidence="5">3.68 mM for acetate (at pH 8)</KM>
        <text evidence="5">kcat is 37.6 sec(-1) for transformylase activity (at pH 8). kcat is 0.309 sec(-1) for acetate kinase activity (at pH 8).</text>
    </kinetics>
</comment>
<comment type="pathway">
    <text evidence="1 11 12 13">Purine metabolism; IMP biosynthesis via de novo pathway; N(2)-formyl-N(1)-(5-phospho-D-ribosyl)glycinamide from N(1)-(5-phospho-D-ribosyl)glycinamide (formate route): step 1/1.</text>
</comment>
<comment type="subunit">
    <text evidence="1 2 3 11">Homodimer.</text>
</comment>
<comment type="interaction">
    <interactant intactId="EBI-553029">
        <id>P33221</id>
    </interactant>
    <interactant intactId="EBI-553011">
        <id>P22939</id>
        <label>ispA</label>
    </interactant>
    <organismsDiffer>false</organismsDiffer>
    <experiments>4</experiments>
</comment>
<comment type="disruption phenotype">
    <text evidence="7">Mutant defective in both purN and purT requires an exogenous purine source for growth.</text>
</comment>
<comment type="similarity">
    <text evidence="1">Belongs to the PurK/PurT family.</text>
</comment>
<sequence>MTLLGTALRPAATRVMLLGSGELGKEVAIECQRLGVEVIAVDRYADAPAMHVAHRSHVINMLDGDALRRVVELEKPHYIVPEIEAIATDMLIQLEEEGLNVVPCARATKLTMNREGIRRLAAEELQLPTSTYRFADSESLFREAVADIGYPCIVKPVMSSSGKGQTFIRSAEQLAQAWKYAQQGGRAGAGRVIVEGVVKFDFEITLLTVSAVDGVHFCAPVGHRQEDGDYRESWQPQQMSPLALERAQEIARKVVLALGGYGLFGVELFVCGDEVIFSEVSPRPHDTGMVTLISQDLSEFALHVRAFLGLPVGGIRQYGPAASAVILPQLTSQNVTFDNVQNAVGADLQIRLFGKPEIDGSRRLGVALATAESVVDAIERAKHAAGQVKVQG</sequence>
<reference key="1">
    <citation type="journal article" date="1994" name="Biochemistry">
        <title>Cloning and characterization of a new purine biosynthetic enzyme: a non-folate glycinamide ribonucleotide transformylase from E. coli.</title>
        <authorList>
            <person name="Marolewski A."/>
            <person name="Smith J.M."/>
            <person name="Benkovic S.J."/>
        </authorList>
    </citation>
    <scope>NUCLEOTIDE SEQUENCE [GENOMIC DNA]</scope>
    <scope>PROTEIN SEQUENCE OF 2-20</scope>
    <scope>FUNCTION</scope>
    <scope>CATALYTIC ACTIVITY</scope>
    <scope>BIOPHYSICOCHEMICAL PROPERTIES</scope>
    <scope>SUBUNIT</scope>
    <scope>SUBSTRATE SPECIFICITY</scope>
    <scope>REACTION MECHANISM</scope>
    <scope>PATHWAY</scope>
    <source>
        <strain>K12</strain>
    </source>
</reference>
<reference key="2">
    <citation type="journal article" date="1996" name="DNA Res.">
        <title>A 460-kb DNA sequence of the Escherichia coli K-12 genome corresponding to the 40.1-50.0 min region on the linkage map.</title>
        <authorList>
            <person name="Itoh T."/>
            <person name="Aiba H."/>
            <person name="Baba T."/>
            <person name="Fujita K."/>
            <person name="Hayashi K."/>
            <person name="Inada T."/>
            <person name="Isono K."/>
            <person name="Kasai H."/>
            <person name="Kimura S."/>
            <person name="Kitakawa M."/>
            <person name="Kitagawa M."/>
            <person name="Makino K."/>
            <person name="Miki T."/>
            <person name="Mizobuchi K."/>
            <person name="Mori H."/>
            <person name="Mori T."/>
            <person name="Motomura K."/>
            <person name="Nakade S."/>
            <person name="Nakamura Y."/>
            <person name="Nashimoto H."/>
            <person name="Nishio Y."/>
            <person name="Oshima T."/>
            <person name="Saito N."/>
            <person name="Sampei G."/>
            <person name="Seki Y."/>
            <person name="Sivasundaram S."/>
            <person name="Tagami H."/>
            <person name="Takeda J."/>
            <person name="Takemoto K."/>
            <person name="Wada C."/>
            <person name="Yamamoto Y."/>
            <person name="Horiuchi T."/>
        </authorList>
    </citation>
    <scope>NUCLEOTIDE SEQUENCE [LARGE SCALE GENOMIC DNA]</scope>
    <source>
        <strain>K12 / W3110 / ATCC 27325 / DSM 5911</strain>
    </source>
</reference>
<reference key="3">
    <citation type="journal article" date="1997" name="Science">
        <title>The complete genome sequence of Escherichia coli K-12.</title>
        <authorList>
            <person name="Blattner F.R."/>
            <person name="Plunkett G. III"/>
            <person name="Bloch C.A."/>
            <person name="Perna N.T."/>
            <person name="Burland V."/>
            <person name="Riley M."/>
            <person name="Collado-Vides J."/>
            <person name="Glasner J.D."/>
            <person name="Rode C.K."/>
            <person name="Mayhew G.F."/>
            <person name="Gregor J."/>
            <person name="Davis N.W."/>
            <person name="Kirkpatrick H.A."/>
            <person name="Goeden M.A."/>
            <person name="Rose D.J."/>
            <person name="Mau B."/>
            <person name="Shao Y."/>
        </authorList>
    </citation>
    <scope>NUCLEOTIDE SEQUENCE [LARGE SCALE GENOMIC DNA]</scope>
    <source>
        <strain>K12 / MG1655 / ATCC 47076</strain>
    </source>
</reference>
<reference key="4">
    <citation type="journal article" date="2006" name="Mol. Syst. Biol.">
        <title>Highly accurate genome sequences of Escherichia coli K-12 strains MG1655 and W3110.</title>
        <authorList>
            <person name="Hayashi K."/>
            <person name="Morooka N."/>
            <person name="Yamamoto Y."/>
            <person name="Fujita K."/>
            <person name="Isono K."/>
            <person name="Choi S."/>
            <person name="Ohtsubo E."/>
            <person name="Baba T."/>
            <person name="Wanner B.L."/>
            <person name="Mori H."/>
            <person name="Horiuchi T."/>
        </authorList>
    </citation>
    <scope>NUCLEOTIDE SEQUENCE [LARGE SCALE GENOMIC DNA]</scope>
    <source>
        <strain>K12 / W3110 / ATCC 27325 / DSM 5911</strain>
    </source>
</reference>
<reference key="5">
    <citation type="journal article" date="1993" name="J. Bacteriol.">
        <title>Evidence for a novel glycinamide ribonucleotide transformylase in Escherichia coli.</title>
        <authorList>
            <person name="Nygaard P."/>
            <person name="Smith J.M."/>
        </authorList>
    </citation>
    <scope>FUNCTION</scope>
    <scope>CATALYTIC ACTIVITY</scope>
    <scope>PATHWAY</scope>
    <scope>DISRUPTION PHENOTYPE</scope>
</reference>
<reference key="6">
    <citation type="journal article" date="1993" name="J. Bacteriol.">
        <title>purU, a source of formate for purT-dependent phosphoribosyl-N-formylglycinamide synthesis.</title>
        <authorList>
            <person name="Nagy P.L."/>
            <person name="McCorkle G."/>
            <person name="Zalkin H."/>
        </authorList>
    </citation>
    <scope>FUNCTION</scope>
    <source>
        <strain>K12 / MC4100 / ATCC 35695 / DSM 6574</strain>
    </source>
</reference>
<reference key="7">
    <citation type="journal article" date="1997" name="Biochemistry">
        <title>Formyl phosphate: a proposed intermediate in the reaction catalyzed by Escherichia coli PurT GAR transformylase.</title>
        <authorList>
            <person name="Marolewski A.E."/>
            <person name="Mattia K.M."/>
            <person name="Warren M.S."/>
            <person name="Benkovic S.J."/>
        </authorList>
    </citation>
    <scope>FUNCTION</scope>
    <scope>CATALYTIC ACTIVITY</scope>
    <scope>BIOPHYSICOCHEMICAL PROPERTIES</scope>
    <scope>SUBSTRATE SPECIFICITY</scope>
    <scope>PATHWAY</scope>
    <scope>REACTION MECHANISM</scope>
    <scope>MUTAGENESIS OF GLY-162</scope>
</reference>
<reference key="8">
    <citation type="journal article" date="2009" name="Mol. Cell. Proteomics">
        <title>Lysine acetylation is a highly abundant and evolutionarily conserved modification in Escherichia coli.</title>
        <authorList>
            <person name="Zhang J."/>
            <person name="Sprung R."/>
            <person name="Pei J."/>
            <person name="Tan X."/>
            <person name="Kim S."/>
            <person name="Zhu H."/>
            <person name="Liu C.F."/>
            <person name="Grishin N.V."/>
            <person name="Zhao Y."/>
        </authorList>
    </citation>
    <scope>ACETYLATION [LARGE SCALE ANALYSIS] AT LYS-179</scope>
    <scope>IDENTIFICATION BY MASS SPECTROMETRY</scope>
    <source>
        <strain>K12 / JW1106</strain>
        <strain>K12 / MG1655 / ATCC 47076</strain>
    </source>
</reference>
<reference evidence="14 15" key="9">
    <citation type="journal article" date="2000" name="Biochemistry">
        <title>Molecular structure of Escherichia coli PurT-encoded glycinamide ribonucleotide transformylase.</title>
        <authorList>
            <person name="Thoden J.B."/>
            <person name="Firestine S."/>
            <person name="Nixon A."/>
            <person name="Benkovic S.J."/>
            <person name="Holden H.M."/>
        </authorList>
    </citation>
    <scope>X-RAY CRYSTALLOGRAPHY (1.75 ANGSTROMS) IN COMPLEX WITH ATP ANALOG; BETA-FORMYL GLYCINAMIDE RIBONUCLEOTIDE AND MAGNESIUM ION</scope>
    <scope>SUBUNIT</scope>
</reference>
<reference evidence="16 17 18 19 20" key="10">
    <citation type="journal article" date="2002" name="J. Biol. Chem.">
        <title>PurT-encoded glycinamide ribonucleotide transformylase. Accommodation of adenosine nucleotide analogs within the active site.</title>
        <authorList>
            <person name="Thoden J.B."/>
            <person name="Firestine S.M."/>
            <person name="Benkovic S.J."/>
            <person name="Holden H.M."/>
        </authorList>
    </citation>
    <scope>X-RAY CRYSTALLOGRAPHY (1.05 ANGSTROMS) IN COMPLEX WITH BETA-FORMYL GLYCINAMIDE RIBONUCLEOTIDE; ATP AND MAGNESIUM ION</scope>
    <scope>SUBUNIT</scope>
</reference>
<evidence type="ECO:0000255" key="1">
    <source>
        <dbReference type="HAMAP-Rule" id="MF_01643"/>
    </source>
</evidence>
<evidence type="ECO:0000269" key="2">
    <source>
    </source>
</evidence>
<evidence type="ECO:0000269" key="3">
    <source>
    </source>
</evidence>
<evidence type="ECO:0000269" key="4">
    <source>
    </source>
</evidence>
<evidence type="ECO:0000269" key="5">
    <source>
    </source>
</evidence>
<evidence type="ECO:0000269" key="6">
    <source>
    </source>
</evidence>
<evidence type="ECO:0000269" key="7">
    <source>
    </source>
</evidence>
<evidence type="ECO:0000269" key="8">
    <source>
    </source>
</evidence>
<evidence type="ECO:0000303" key="9">
    <source>
    </source>
</evidence>
<evidence type="ECO:0000303" key="10">
    <source>
    </source>
</evidence>
<evidence type="ECO:0000305" key="11">
    <source>
    </source>
</evidence>
<evidence type="ECO:0000305" key="12">
    <source>
    </source>
</evidence>
<evidence type="ECO:0000305" key="13">
    <source>
    </source>
</evidence>
<evidence type="ECO:0007744" key="14">
    <source>
        <dbReference type="PDB" id="1EYZ"/>
    </source>
</evidence>
<evidence type="ECO:0007744" key="15">
    <source>
        <dbReference type="PDB" id="1EZ1"/>
    </source>
</evidence>
<evidence type="ECO:0007744" key="16">
    <source>
        <dbReference type="PDB" id="1KJ8"/>
    </source>
</evidence>
<evidence type="ECO:0007744" key="17">
    <source>
        <dbReference type="PDB" id="1KJ9"/>
    </source>
</evidence>
<evidence type="ECO:0007744" key="18">
    <source>
        <dbReference type="PDB" id="1KJI"/>
    </source>
</evidence>
<evidence type="ECO:0007744" key="19">
    <source>
        <dbReference type="PDB" id="1KJJ"/>
    </source>
</evidence>
<evidence type="ECO:0007744" key="20">
    <source>
        <dbReference type="PDB" id="1KJQ"/>
    </source>
</evidence>
<evidence type="ECO:0007829" key="21">
    <source>
        <dbReference type="PDB" id="1KJ8"/>
    </source>
</evidence>
<evidence type="ECO:0007829" key="22">
    <source>
        <dbReference type="PDB" id="1KJQ"/>
    </source>
</evidence>
<feature type="initiator methionine" description="Removed" evidence="5">
    <location>
        <position position="1"/>
    </location>
</feature>
<feature type="chain" id="PRO_0000074956" description="Formate-dependent phosphoribosylglycinamide formyltransferase">
    <location>
        <begin position="2"/>
        <end position="392"/>
    </location>
</feature>
<feature type="domain" description="ATP-grasp" evidence="1">
    <location>
        <begin position="119"/>
        <end position="308"/>
    </location>
</feature>
<feature type="binding site" evidence="1 2 3">
    <location>
        <begin position="22"/>
        <end position="23"/>
    </location>
    <ligand>
        <name>N(1)-(5-phospho-beta-D-ribosyl)glycinamide</name>
        <dbReference type="ChEBI" id="CHEBI:143788"/>
    </ligand>
</feature>
<feature type="binding site" evidence="1 2 3">
    <location>
        <position position="82"/>
    </location>
    <ligand>
        <name>N(1)-(5-phospho-beta-D-ribosyl)glycinamide</name>
        <dbReference type="ChEBI" id="CHEBI:143788"/>
    </ligand>
</feature>
<feature type="binding site" evidence="1 2 3">
    <location>
        <position position="114"/>
    </location>
    <ligand>
        <name>ATP</name>
        <dbReference type="ChEBI" id="CHEBI:30616"/>
    </ligand>
</feature>
<feature type="binding site" evidence="1 2 3">
    <location>
        <position position="155"/>
    </location>
    <ligand>
        <name>ATP</name>
        <dbReference type="ChEBI" id="CHEBI:30616"/>
    </ligand>
</feature>
<feature type="binding site" evidence="1 2 3">
    <location>
        <begin position="160"/>
        <end position="165"/>
    </location>
    <ligand>
        <name>ATP</name>
        <dbReference type="ChEBI" id="CHEBI:30616"/>
    </ligand>
</feature>
<feature type="binding site" evidence="1 2 3">
    <location>
        <begin position="195"/>
        <end position="198"/>
    </location>
    <ligand>
        <name>ATP</name>
        <dbReference type="ChEBI" id="CHEBI:30616"/>
    </ligand>
</feature>
<feature type="binding site" evidence="1 2 3">
    <location>
        <position position="203"/>
    </location>
    <ligand>
        <name>ATP</name>
        <dbReference type="ChEBI" id="CHEBI:30616"/>
    </ligand>
</feature>
<feature type="binding site" evidence="1 2 3">
    <location>
        <position position="267"/>
    </location>
    <ligand>
        <name>Mg(2+)</name>
        <dbReference type="ChEBI" id="CHEBI:18420"/>
    </ligand>
</feature>
<feature type="binding site" evidence="1 2 3">
    <location>
        <position position="279"/>
    </location>
    <ligand>
        <name>Mg(2+)</name>
        <dbReference type="ChEBI" id="CHEBI:18420"/>
    </ligand>
</feature>
<feature type="binding site" evidence="1 2 3">
    <location>
        <position position="286"/>
    </location>
    <ligand>
        <name>N(1)-(5-phospho-beta-D-ribosyl)glycinamide</name>
        <dbReference type="ChEBI" id="CHEBI:143788"/>
    </ligand>
</feature>
<feature type="binding site" evidence="1 2 3">
    <location>
        <position position="355"/>
    </location>
    <ligand>
        <name>N(1)-(5-phospho-beta-D-ribosyl)glycinamide</name>
        <dbReference type="ChEBI" id="CHEBI:143788"/>
    </ligand>
</feature>
<feature type="binding site" evidence="1 2 3">
    <location>
        <begin position="362"/>
        <end position="363"/>
    </location>
    <ligand>
        <name>N(1)-(5-phospho-beta-D-ribosyl)glycinamide</name>
        <dbReference type="ChEBI" id="CHEBI:143788"/>
    </ligand>
</feature>
<feature type="modified residue" description="N6-acetyllysine" evidence="4">
    <location>
        <position position="179"/>
    </location>
</feature>
<feature type="mutagenesis site" description="Strong decrease in the reaction rate for the conversion of formate to FGAR and in the affinity for formate. 3- and 2-fold decrease in the affinity for ATP and GAR, respectively." evidence="8">
    <original>G</original>
    <variation>I</variation>
    <location>
        <position position="162"/>
    </location>
</feature>
<feature type="strand" evidence="22">
    <location>
        <begin position="14"/>
        <end position="19"/>
    </location>
</feature>
<feature type="helix" evidence="22">
    <location>
        <begin position="22"/>
        <end position="32"/>
    </location>
</feature>
<feature type="turn" evidence="22">
    <location>
        <begin position="33"/>
        <end position="35"/>
    </location>
</feature>
<feature type="strand" evidence="22">
    <location>
        <begin position="37"/>
        <end position="44"/>
    </location>
</feature>
<feature type="helix" evidence="22">
    <location>
        <begin position="48"/>
        <end position="52"/>
    </location>
</feature>
<feature type="strand" evidence="22">
    <location>
        <begin position="53"/>
        <end position="58"/>
    </location>
</feature>
<feature type="helix" evidence="22">
    <location>
        <begin position="64"/>
        <end position="74"/>
    </location>
</feature>
<feature type="strand" evidence="22">
    <location>
        <begin position="77"/>
        <end position="81"/>
    </location>
</feature>
<feature type="helix" evidence="22">
    <location>
        <begin position="88"/>
        <end position="96"/>
    </location>
</feature>
<feature type="strand" evidence="22">
    <location>
        <begin position="100"/>
        <end position="103"/>
    </location>
</feature>
<feature type="helix" evidence="22">
    <location>
        <begin position="105"/>
        <end position="112"/>
    </location>
</feature>
<feature type="helix" evidence="22">
    <location>
        <begin position="114"/>
        <end position="122"/>
    </location>
</feature>
<feature type="strand" evidence="22">
    <location>
        <begin position="132"/>
        <end position="137"/>
    </location>
</feature>
<feature type="helix" evidence="22">
    <location>
        <begin position="138"/>
        <end position="148"/>
    </location>
</feature>
<feature type="strand" evidence="22">
    <location>
        <begin position="150"/>
        <end position="157"/>
    </location>
</feature>
<feature type="turn" evidence="21">
    <location>
        <begin position="161"/>
        <end position="164"/>
    </location>
</feature>
<feature type="strand" evidence="22">
    <location>
        <begin position="166"/>
        <end position="168"/>
    </location>
</feature>
<feature type="helix" evidence="22">
    <location>
        <begin position="171"/>
        <end position="173"/>
    </location>
</feature>
<feature type="helix" evidence="22">
    <location>
        <begin position="174"/>
        <end position="184"/>
    </location>
</feature>
<feature type="helix" evidence="22">
    <location>
        <begin position="186"/>
        <end position="188"/>
    </location>
</feature>
<feature type="strand" evidence="22">
    <location>
        <begin position="192"/>
        <end position="196"/>
    </location>
</feature>
<feature type="strand" evidence="22">
    <location>
        <begin position="201"/>
        <end position="211"/>
    </location>
</feature>
<feature type="strand" evidence="22">
    <location>
        <begin position="214"/>
        <end position="217"/>
    </location>
</feature>
<feature type="strand" evidence="22">
    <location>
        <begin position="221"/>
        <end position="226"/>
    </location>
</feature>
<feature type="strand" evidence="22">
    <location>
        <begin position="229"/>
        <end position="235"/>
    </location>
</feature>
<feature type="helix" evidence="22">
    <location>
        <begin position="241"/>
        <end position="258"/>
    </location>
</feature>
<feature type="strand" evidence="22">
    <location>
        <begin position="260"/>
        <end position="271"/>
    </location>
</feature>
<feature type="strand" evidence="22">
    <location>
        <begin position="274"/>
        <end position="283"/>
    </location>
</feature>
<feature type="helix" evidence="22">
    <location>
        <begin position="286"/>
        <end position="290"/>
    </location>
</feature>
<feature type="helix" evidence="22">
    <location>
        <begin position="291"/>
        <end position="294"/>
    </location>
</feature>
<feature type="strand" evidence="22">
    <location>
        <begin position="295"/>
        <end position="297"/>
    </location>
</feature>
<feature type="helix" evidence="22">
    <location>
        <begin position="299"/>
        <end position="307"/>
    </location>
</feature>
<feature type="strand" evidence="22">
    <location>
        <begin position="319"/>
        <end position="326"/>
    </location>
</feature>
<feature type="strand" evidence="22">
    <location>
        <begin position="329"/>
        <end position="334"/>
    </location>
</feature>
<feature type="strand" evidence="22">
    <location>
        <begin position="336"/>
        <end position="338"/>
    </location>
</feature>
<feature type="helix" evidence="22">
    <location>
        <begin position="340"/>
        <end position="342"/>
    </location>
</feature>
<feature type="strand" evidence="22">
    <location>
        <begin position="348"/>
        <end position="352"/>
    </location>
</feature>
<feature type="strand" evidence="22">
    <location>
        <begin position="358"/>
        <end position="361"/>
    </location>
</feature>
<feature type="strand" evidence="22">
    <location>
        <begin position="365"/>
        <end position="370"/>
    </location>
</feature>
<feature type="helix" evidence="22">
    <location>
        <begin position="374"/>
        <end position="387"/>
    </location>
</feature>
<feature type="strand" evidence="22">
    <location>
        <begin position="389"/>
        <end position="391"/>
    </location>
</feature>
<name>PURT_ECOLI</name>
<accession>P33221</accession>
<proteinExistence type="evidence at protein level"/>
<keyword id="KW-0002">3D-structure</keyword>
<keyword id="KW-0007">Acetylation</keyword>
<keyword id="KW-0067">ATP-binding</keyword>
<keyword id="KW-0903">Direct protein sequencing</keyword>
<keyword id="KW-0436">Ligase</keyword>
<keyword id="KW-0460">Magnesium</keyword>
<keyword id="KW-0479">Metal-binding</keyword>
<keyword id="KW-0547">Nucleotide-binding</keyword>
<keyword id="KW-0658">Purine biosynthesis</keyword>
<keyword id="KW-1185">Reference proteome</keyword>